<gene>
    <name evidence="1" type="primary">msrQ</name>
    <name type="ordered locus">YpsIP31758_0394</name>
</gene>
<protein>
    <recommendedName>
        <fullName evidence="1">Protein-methionine-sulfoxide reductase heme-binding subunit MsrQ</fullName>
    </recommendedName>
    <alternativeName>
        <fullName evidence="1">Flavocytochrome MsrQ</fullName>
    </alternativeName>
</protein>
<comment type="function">
    <text evidence="1">Part of the MsrPQ system that repairs oxidized periplasmic proteins containing methionine sulfoxide residues (Met-O), using respiratory chain electrons. Thus protects these proteins from oxidative-stress damage caused by reactive species of oxygen and chlorine generated by the host defense mechanisms. MsrPQ is essential for the maintenance of envelope integrity under bleach stress, rescuing a wide series of structurally unrelated periplasmic proteins from methionine oxidation. MsrQ provides electrons for reduction to the reductase catalytic subunit MsrP, using the quinone pool of the respiratory chain.</text>
</comment>
<comment type="cofactor">
    <cofactor evidence="1">
        <name>FMN</name>
        <dbReference type="ChEBI" id="CHEBI:58210"/>
    </cofactor>
    <text evidence="1">Binds 1 FMN per subunit.</text>
</comment>
<comment type="cofactor">
    <cofactor evidence="1">
        <name>heme b</name>
        <dbReference type="ChEBI" id="CHEBI:60344"/>
    </cofactor>
    <text evidence="1">Binds 1 heme b (iron(II)-protoporphyrin IX) group per subunit.</text>
</comment>
<comment type="subunit">
    <text evidence="1">Heterodimer of a catalytic subunit (MsrP) and a heme-binding subunit (MsrQ).</text>
</comment>
<comment type="subcellular location">
    <subcellularLocation>
        <location evidence="1">Cell inner membrane</location>
        <topology evidence="1">Multi-pass membrane protein</topology>
    </subcellularLocation>
</comment>
<comment type="similarity">
    <text evidence="1">Belongs to the MsrQ family.</text>
</comment>
<accession>A7FDQ9</accession>
<organism>
    <name type="scientific">Yersinia pseudotuberculosis serotype O:1b (strain IP 31758)</name>
    <dbReference type="NCBI Taxonomy" id="349747"/>
    <lineage>
        <taxon>Bacteria</taxon>
        <taxon>Pseudomonadati</taxon>
        <taxon>Pseudomonadota</taxon>
        <taxon>Gammaproteobacteria</taxon>
        <taxon>Enterobacterales</taxon>
        <taxon>Yersiniaceae</taxon>
        <taxon>Yersinia</taxon>
    </lineage>
</organism>
<sequence length="203" mass="23361">MRLSLRHITWLKIAIWLAATLPLLWLVLSINLGGLSADPAKDIQHFTGRMALKLLLATLLVSPLARYSKQPLLLRCRRLLGLWCFAWGTLHLLSYSILELGLSNIGLLGHELINRPYLTLGIISWLVLLALALTSTRWAQRKMGARWQKLHNWVYVVAILAPIHYLWSVKTLSPWPIIYAVMAALLLLLRYKLLLPRYKKFRQ</sequence>
<keyword id="KW-0997">Cell inner membrane</keyword>
<keyword id="KW-1003">Cell membrane</keyword>
<keyword id="KW-0249">Electron transport</keyword>
<keyword id="KW-0285">Flavoprotein</keyword>
<keyword id="KW-0288">FMN</keyword>
<keyword id="KW-0349">Heme</keyword>
<keyword id="KW-0408">Iron</keyword>
<keyword id="KW-0472">Membrane</keyword>
<keyword id="KW-0479">Metal-binding</keyword>
<keyword id="KW-0812">Transmembrane</keyword>
<keyword id="KW-1133">Transmembrane helix</keyword>
<keyword id="KW-0813">Transport</keyword>
<name>MSRQ_YERP3</name>
<reference key="1">
    <citation type="journal article" date="2007" name="PLoS Genet.">
        <title>The complete genome sequence of Yersinia pseudotuberculosis IP31758, the causative agent of Far East scarlet-like fever.</title>
        <authorList>
            <person name="Eppinger M."/>
            <person name="Rosovitz M.J."/>
            <person name="Fricke W.F."/>
            <person name="Rasko D.A."/>
            <person name="Kokorina G."/>
            <person name="Fayolle C."/>
            <person name="Lindler L.E."/>
            <person name="Carniel E."/>
            <person name="Ravel J."/>
        </authorList>
    </citation>
    <scope>NUCLEOTIDE SEQUENCE [LARGE SCALE GENOMIC DNA]</scope>
    <source>
        <strain>IP 31758</strain>
    </source>
</reference>
<feature type="chain" id="PRO_1000066194" description="Protein-methionine-sulfoxide reductase heme-binding subunit MsrQ">
    <location>
        <begin position="1"/>
        <end position="203"/>
    </location>
</feature>
<feature type="transmembrane region" description="Helical" evidence="1">
    <location>
        <begin position="13"/>
        <end position="33"/>
    </location>
</feature>
<feature type="transmembrane region" description="Helical" evidence="1">
    <location>
        <begin position="79"/>
        <end position="99"/>
    </location>
</feature>
<feature type="transmembrane region" description="Helical" evidence="1">
    <location>
        <begin position="116"/>
        <end position="136"/>
    </location>
</feature>
<feature type="transmembrane region" description="Helical" evidence="1">
    <location>
        <begin position="147"/>
        <end position="167"/>
    </location>
</feature>
<feature type="transmembrane region" description="Helical" evidence="1">
    <location>
        <begin position="169"/>
        <end position="189"/>
    </location>
</feature>
<dbReference type="EMBL" id="CP000720">
    <property type="protein sequence ID" value="ABS46488.1"/>
    <property type="molecule type" value="Genomic_DNA"/>
</dbReference>
<dbReference type="RefSeq" id="WP_012104392.1">
    <property type="nucleotide sequence ID" value="NC_009708.1"/>
</dbReference>
<dbReference type="SMR" id="A7FDQ9"/>
<dbReference type="KEGG" id="ypi:YpsIP31758_0394"/>
<dbReference type="HOGENOM" id="CLU_080662_1_0_6"/>
<dbReference type="Proteomes" id="UP000002412">
    <property type="component" value="Chromosome"/>
</dbReference>
<dbReference type="GO" id="GO:0005886">
    <property type="term" value="C:plasma membrane"/>
    <property type="evidence" value="ECO:0007669"/>
    <property type="project" value="UniProtKB-SubCell"/>
</dbReference>
<dbReference type="GO" id="GO:0009055">
    <property type="term" value="F:electron transfer activity"/>
    <property type="evidence" value="ECO:0007669"/>
    <property type="project" value="UniProtKB-UniRule"/>
</dbReference>
<dbReference type="GO" id="GO:0010181">
    <property type="term" value="F:FMN binding"/>
    <property type="evidence" value="ECO:0007669"/>
    <property type="project" value="UniProtKB-UniRule"/>
</dbReference>
<dbReference type="GO" id="GO:0020037">
    <property type="term" value="F:heme binding"/>
    <property type="evidence" value="ECO:0007669"/>
    <property type="project" value="UniProtKB-UniRule"/>
</dbReference>
<dbReference type="GO" id="GO:0046872">
    <property type="term" value="F:metal ion binding"/>
    <property type="evidence" value="ECO:0007669"/>
    <property type="project" value="UniProtKB-KW"/>
</dbReference>
<dbReference type="GO" id="GO:0016679">
    <property type="term" value="F:oxidoreductase activity, acting on diphenols and related substances as donors"/>
    <property type="evidence" value="ECO:0007669"/>
    <property type="project" value="TreeGrafter"/>
</dbReference>
<dbReference type="GO" id="GO:0030091">
    <property type="term" value="P:protein repair"/>
    <property type="evidence" value="ECO:0007669"/>
    <property type="project" value="UniProtKB-UniRule"/>
</dbReference>
<dbReference type="HAMAP" id="MF_01207">
    <property type="entry name" value="MsrQ"/>
    <property type="match status" value="1"/>
</dbReference>
<dbReference type="InterPro" id="IPR013130">
    <property type="entry name" value="Fe3_Rdtase_TM_dom"/>
</dbReference>
<dbReference type="InterPro" id="IPR022837">
    <property type="entry name" value="MsrQ-like"/>
</dbReference>
<dbReference type="NCBIfam" id="NF003832">
    <property type="entry name" value="PRK05419.1-4"/>
    <property type="match status" value="1"/>
</dbReference>
<dbReference type="PANTHER" id="PTHR36964">
    <property type="entry name" value="PROTEIN-METHIONINE-SULFOXIDE REDUCTASE HEME-BINDING SUBUNIT MSRQ"/>
    <property type="match status" value="1"/>
</dbReference>
<dbReference type="PANTHER" id="PTHR36964:SF1">
    <property type="entry name" value="PROTEIN-METHIONINE-SULFOXIDE REDUCTASE HEME-BINDING SUBUNIT MSRQ"/>
    <property type="match status" value="1"/>
</dbReference>
<dbReference type="Pfam" id="PF01794">
    <property type="entry name" value="Ferric_reduct"/>
    <property type="match status" value="1"/>
</dbReference>
<proteinExistence type="inferred from homology"/>
<evidence type="ECO:0000255" key="1">
    <source>
        <dbReference type="HAMAP-Rule" id="MF_01207"/>
    </source>
</evidence>